<evidence type="ECO:0000255" key="1">
    <source>
        <dbReference type="HAMAP-Rule" id="MF_01710"/>
    </source>
</evidence>
<sequence length="274" mass="30535">MLNTNKQAAASFQGVYFSYSELPLIRNLSFDVFEGEYVCIVGHNGSGKSTISKLLTGLLKPQAGTIKIFGKTISSENVTYLRNHIGIIFQNPDNQFIGITVEDDIAFGLENRRYTREKMKSIIEDVAQQAGITELLQKEPHNLSGGQKQRVAIASVLALNPAIIIFDESTSMLDPKAKRTIKQFMVELRNQGKCVISITHDMEEVTKADKVLVMNEGRLIRQGKPKDVFNSAAELQKIRLDIPFSLSLSTKVNGVTSTIDYQQLIEAIGKLWKK</sequence>
<feature type="chain" id="PRO_0000092045" description="Energy-coupling factor transporter ATP-binding protein EcfA1">
    <location>
        <begin position="1"/>
        <end position="274"/>
    </location>
</feature>
<feature type="domain" description="ABC transporter" evidence="1">
    <location>
        <begin position="10"/>
        <end position="241"/>
    </location>
</feature>
<feature type="binding site" evidence="1">
    <location>
        <begin position="42"/>
        <end position="49"/>
    </location>
    <ligand>
        <name>ATP</name>
        <dbReference type="ChEBI" id="CHEBI:30616"/>
    </ligand>
</feature>
<proteinExistence type="inferred from homology"/>
<accession>Q50294</accession>
<reference key="1">
    <citation type="journal article" date="1996" name="Nucleic Acids Res.">
        <title>Sequence analysis of 56 kb from the genome of the bacterium Mycoplasma pneumoniae comprising the dnaA region, the atp operon and a cluster of ribosomal protein genes.</title>
        <authorList>
            <person name="Hilbert H."/>
            <person name="Himmelreich R."/>
            <person name="Plagens H."/>
            <person name="Herrmann R."/>
        </authorList>
    </citation>
    <scope>NUCLEOTIDE SEQUENCE [GENOMIC DNA]</scope>
    <source>
        <strain>ATCC 29342 / M129 / Subtype 1</strain>
    </source>
</reference>
<reference key="2">
    <citation type="journal article" date="1996" name="Nucleic Acids Res.">
        <title>Complete sequence analysis of the genome of the bacterium Mycoplasma pneumoniae.</title>
        <authorList>
            <person name="Himmelreich R."/>
            <person name="Hilbert H."/>
            <person name="Plagens H."/>
            <person name="Pirkl E."/>
            <person name="Li B.-C."/>
            <person name="Herrmann R."/>
        </authorList>
    </citation>
    <scope>NUCLEOTIDE SEQUENCE [LARGE SCALE GENOMIC DNA]</scope>
    <source>
        <strain>ATCC 29342 / M129 / Subtype 1</strain>
    </source>
</reference>
<comment type="function">
    <text evidence="1">ATP-binding (A) component of a common energy-coupling factor (ECF) ABC-transporter complex. Unlike classic ABC transporters this ECF transporter provides the energy necessary to transport a number of different substrates.</text>
</comment>
<comment type="subunit">
    <text evidence="1">Forms a stable energy-coupling factor (ECF) transporter complex composed of 2 membrane-embedded substrate-binding proteins (S component), 2 ATP-binding proteins (A component) and 2 transmembrane proteins (T component).</text>
</comment>
<comment type="subcellular location">
    <subcellularLocation>
        <location evidence="1">Cell membrane</location>
        <topology evidence="1">Peripheral membrane protein</topology>
    </subcellularLocation>
</comment>
<comment type="similarity">
    <text evidence="1">Belongs to the ABC transporter superfamily. Energy-coupling factor EcfA family.</text>
</comment>
<gene>
    <name evidence="1" type="primary">ecfA1</name>
    <name type="synonym">cbiO1</name>
    <name type="ordered locus">MPN_193</name>
    <name type="ORF">GT9_orf274</name>
    <name type="ORF">MP638</name>
</gene>
<keyword id="KW-0067">ATP-binding</keyword>
<keyword id="KW-1003">Cell membrane</keyword>
<keyword id="KW-0472">Membrane</keyword>
<keyword id="KW-0547">Nucleotide-binding</keyword>
<keyword id="KW-1185">Reference proteome</keyword>
<keyword id="KW-1278">Translocase</keyword>
<keyword id="KW-0813">Transport</keyword>
<organism>
    <name type="scientific">Mycoplasma pneumoniae (strain ATCC 29342 / M129 / Subtype 1)</name>
    <name type="common">Mycoplasmoides pneumoniae</name>
    <dbReference type="NCBI Taxonomy" id="272634"/>
    <lineage>
        <taxon>Bacteria</taxon>
        <taxon>Bacillati</taxon>
        <taxon>Mycoplasmatota</taxon>
        <taxon>Mycoplasmoidales</taxon>
        <taxon>Mycoplasmoidaceae</taxon>
        <taxon>Mycoplasmoides</taxon>
    </lineage>
</organism>
<dbReference type="EC" id="7.-.-.-" evidence="1"/>
<dbReference type="EMBL" id="U34795">
    <property type="protein sequence ID" value="AAC43688.1"/>
    <property type="molecule type" value="Genomic_DNA"/>
</dbReference>
<dbReference type="EMBL" id="U00089">
    <property type="protein sequence ID" value="AAB96286.1"/>
    <property type="molecule type" value="Genomic_DNA"/>
</dbReference>
<dbReference type="PIR" id="S62815">
    <property type="entry name" value="S62815"/>
</dbReference>
<dbReference type="RefSeq" id="NP_109881.1">
    <property type="nucleotide sequence ID" value="NC_000912.1"/>
</dbReference>
<dbReference type="RefSeq" id="WP_010874550.1">
    <property type="nucleotide sequence ID" value="NZ_OU342337.1"/>
</dbReference>
<dbReference type="SMR" id="Q50294"/>
<dbReference type="STRING" id="272634.MPN_193"/>
<dbReference type="EnsemblBacteria" id="AAB96286">
    <property type="protein sequence ID" value="AAB96286"/>
    <property type="gene ID" value="MPN_193"/>
</dbReference>
<dbReference type="KEGG" id="mpn:MPN_193"/>
<dbReference type="PATRIC" id="fig|272634.6.peg.211"/>
<dbReference type="HOGENOM" id="CLU_000604_1_22_14"/>
<dbReference type="OrthoDB" id="9784332at2"/>
<dbReference type="BioCyc" id="MPNE272634:G1GJ3-309-MONOMER"/>
<dbReference type="Proteomes" id="UP000000808">
    <property type="component" value="Chromosome"/>
</dbReference>
<dbReference type="GO" id="GO:0043190">
    <property type="term" value="C:ATP-binding cassette (ABC) transporter complex"/>
    <property type="evidence" value="ECO:0007669"/>
    <property type="project" value="TreeGrafter"/>
</dbReference>
<dbReference type="GO" id="GO:0005524">
    <property type="term" value="F:ATP binding"/>
    <property type="evidence" value="ECO:0007669"/>
    <property type="project" value="UniProtKB-KW"/>
</dbReference>
<dbReference type="GO" id="GO:0016887">
    <property type="term" value="F:ATP hydrolysis activity"/>
    <property type="evidence" value="ECO:0007669"/>
    <property type="project" value="InterPro"/>
</dbReference>
<dbReference type="GO" id="GO:0042626">
    <property type="term" value="F:ATPase-coupled transmembrane transporter activity"/>
    <property type="evidence" value="ECO:0007669"/>
    <property type="project" value="TreeGrafter"/>
</dbReference>
<dbReference type="CDD" id="cd03225">
    <property type="entry name" value="ABC_cobalt_CbiO_domain1"/>
    <property type="match status" value="1"/>
</dbReference>
<dbReference type="FunFam" id="3.40.50.300:FF:000224">
    <property type="entry name" value="Energy-coupling factor transporter ATP-binding protein EcfA"/>
    <property type="match status" value="1"/>
</dbReference>
<dbReference type="Gene3D" id="3.40.50.300">
    <property type="entry name" value="P-loop containing nucleotide triphosphate hydrolases"/>
    <property type="match status" value="1"/>
</dbReference>
<dbReference type="InterPro" id="IPR003593">
    <property type="entry name" value="AAA+_ATPase"/>
</dbReference>
<dbReference type="InterPro" id="IPR003439">
    <property type="entry name" value="ABC_transporter-like_ATP-bd"/>
</dbReference>
<dbReference type="InterPro" id="IPR017871">
    <property type="entry name" value="ABC_transporter-like_CS"/>
</dbReference>
<dbReference type="InterPro" id="IPR015856">
    <property type="entry name" value="ABC_transpr_CbiO/EcfA_su"/>
</dbReference>
<dbReference type="InterPro" id="IPR050095">
    <property type="entry name" value="ECF_ABC_transporter_ATP-bd"/>
</dbReference>
<dbReference type="InterPro" id="IPR030947">
    <property type="entry name" value="EcfA_1"/>
</dbReference>
<dbReference type="InterPro" id="IPR027417">
    <property type="entry name" value="P-loop_NTPase"/>
</dbReference>
<dbReference type="NCBIfam" id="TIGR04520">
    <property type="entry name" value="ECF_ATPase_1"/>
    <property type="match status" value="1"/>
</dbReference>
<dbReference type="NCBIfam" id="NF010167">
    <property type="entry name" value="PRK13648.1"/>
    <property type="match status" value="1"/>
</dbReference>
<dbReference type="PANTHER" id="PTHR43553:SF24">
    <property type="entry name" value="ENERGY-COUPLING FACTOR TRANSPORTER ATP-BINDING PROTEIN ECFA1"/>
    <property type="match status" value="1"/>
</dbReference>
<dbReference type="PANTHER" id="PTHR43553">
    <property type="entry name" value="HEAVY METAL TRANSPORTER"/>
    <property type="match status" value="1"/>
</dbReference>
<dbReference type="Pfam" id="PF00005">
    <property type="entry name" value="ABC_tran"/>
    <property type="match status" value="1"/>
</dbReference>
<dbReference type="SMART" id="SM00382">
    <property type="entry name" value="AAA"/>
    <property type="match status" value="1"/>
</dbReference>
<dbReference type="SUPFAM" id="SSF52540">
    <property type="entry name" value="P-loop containing nucleoside triphosphate hydrolases"/>
    <property type="match status" value="1"/>
</dbReference>
<dbReference type="PROSITE" id="PS00211">
    <property type="entry name" value="ABC_TRANSPORTER_1"/>
    <property type="match status" value="1"/>
</dbReference>
<dbReference type="PROSITE" id="PS50893">
    <property type="entry name" value="ABC_TRANSPORTER_2"/>
    <property type="match status" value="1"/>
</dbReference>
<dbReference type="PROSITE" id="PS51246">
    <property type="entry name" value="CBIO"/>
    <property type="match status" value="1"/>
</dbReference>
<name>ECFA1_MYCPN</name>
<protein>
    <recommendedName>
        <fullName evidence="1">Energy-coupling factor transporter ATP-binding protein EcfA1</fullName>
        <shortName evidence="1">ECF transporter A component EcfA1</shortName>
        <ecNumber evidence="1">7.-.-.-</ecNumber>
    </recommendedName>
</protein>